<organism>
    <name type="scientific">Wolbachia sp. subsp. Brugia malayi (strain TRS)</name>
    <dbReference type="NCBI Taxonomy" id="292805"/>
    <lineage>
        <taxon>Bacteria</taxon>
        <taxon>Pseudomonadati</taxon>
        <taxon>Pseudomonadota</taxon>
        <taxon>Alphaproteobacteria</taxon>
        <taxon>Rickettsiales</taxon>
        <taxon>Anaplasmataceae</taxon>
        <taxon>Wolbachieae</taxon>
        <taxon>Wolbachia</taxon>
    </lineage>
</organism>
<sequence>MPTINQLVRKGRLKLSCKKKVPALGKSNPQRRGVCTKVYTTTPRKPNSALRKVARVRISGYGEVTAYIPGEGHNLQEHSVVLIRGGRVKDLPGVRYHIIRGALDLRGVQNRKKARSKYGVKKSS</sequence>
<feature type="chain" id="PRO_0000226423" description="Small ribosomal subunit protein uS12">
    <location>
        <begin position="1"/>
        <end position="124"/>
    </location>
</feature>
<feature type="modified residue" description="3-methylthioaspartic acid" evidence="1">
    <location>
        <position position="90"/>
    </location>
</feature>
<evidence type="ECO:0000250" key="1"/>
<evidence type="ECO:0000255" key="2">
    <source>
        <dbReference type="HAMAP-Rule" id="MF_00403"/>
    </source>
</evidence>
<evidence type="ECO:0000305" key="3"/>
<proteinExistence type="inferred from homology"/>
<reference key="1">
    <citation type="journal article" date="2005" name="PLoS Biol.">
        <title>The Wolbachia genome of Brugia malayi: endosymbiont evolution within a human pathogenic nematode.</title>
        <authorList>
            <person name="Foster J."/>
            <person name="Ganatra M."/>
            <person name="Kamal I."/>
            <person name="Ware J."/>
            <person name="Makarova K."/>
            <person name="Ivanova N."/>
            <person name="Bhattacharyya A."/>
            <person name="Kapatral V."/>
            <person name="Kumar S."/>
            <person name="Posfai J."/>
            <person name="Vincze T."/>
            <person name="Ingram J."/>
            <person name="Moran L."/>
            <person name="Lapidus A."/>
            <person name="Omelchenko M."/>
            <person name="Kyrpides N."/>
            <person name="Ghedin E."/>
            <person name="Wang S."/>
            <person name="Goltsman E."/>
            <person name="Joukov V."/>
            <person name="Ostrovskaya O."/>
            <person name="Tsukerman K."/>
            <person name="Mazur M."/>
            <person name="Comb D."/>
            <person name="Koonin E."/>
            <person name="Slatko B."/>
        </authorList>
    </citation>
    <scope>NUCLEOTIDE SEQUENCE [LARGE SCALE GENOMIC DNA]</scope>
    <source>
        <strain>TRS</strain>
    </source>
</reference>
<dbReference type="EMBL" id="AE017321">
    <property type="protein sequence ID" value="AAW70935.1"/>
    <property type="molecule type" value="Genomic_DNA"/>
</dbReference>
<dbReference type="RefSeq" id="WP_011256545.1">
    <property type="nucleotide sequence ID" value="NC_006833.1"/>
</dbReference>
<dbReference type="SMR" id="Q5GST9"/>
<dbReference type="STRING" id="292805.Wbm0346"/>
<dbReference type="KEGG" id="wbm:Wbm0346"/>
<dbReference type="eggNOG" id="COG0048">
    <property type="taxonomic scope" value="Bacteria"/>
</dbReference>
<dbReference type="HOGENOM" id="CLU_104295_1_2_5"/>
<dbReference type="Proteomes" id="UP000000534">
    <property type="component" value="Chromosome"/>
</dbReference>
<dbReference type="GO" id="GO:0015935">
    <property type="term" value="C:small ribosomal subunit"/>
    <property type="evidence" value="ECO:0007669"/>
    <property type="project" value="InterPro"/>
</dbReference>
<dbReference type="GO" id="GO:0019843">
    <property type="term" value="F:rRNA binding"/>
    <property type="evidence" value="ECO:0007669"/>
    <property type="project" value="UniProtKB-UniRule"/>
</dbReference>
<dbReference type="GO" id="GO:0003735">
    <property type="term" value="F:structural constituent of ribosome"/>
    <property type="evidence" value="ECO:0007669"/>
    <property type="project" value="InterPro"/>
</dbReference>
<dbReference type="GO" id="GO:0000049">
    <property type="term" value="F:tRNA binding"/>
    <property type="evidence" value="ECO:0007669"/>
    <property type="project" value="UniProtKB-UniRule"/>
</dbReference>
<dbReference type="GO" id="GO:0006412">
    <property type="term" value="P:translation"/>
    <property type="evidence" value="ECO:0007669"/>
    <property type="project" value="UniProtKB-UniRule"/>
</dbReference>
<dbReference type="CDD" id="cd03368">
    <property type="entry name" value="Ribosomal_S12"/>
    <property type="match status" value="1"/>
</dbReference>
<dbReference type="FunFam" id="2.40.50.140:FF:000001">
    <property type="entry name" value="30S ribosomal protein S12"/>
    <property type="match status" value="1"/>
</dbReference>
<dbReference type="Gene3D" id="2.40.50.140">
    <property type="entry name" value="Nucleic acid-binding proteins"/>
    <property type="match status" value="1"/>
</dbReference>
<dbReference type="HAMAP" id="MF_00403_B">
    <property type="entry name" value="Ribosomal_uS12_B"/>
    <property type="match status" value="1"/>
</dbReference>
<dbReference type="InterPro" id="IPR012340">
    <property type="entry name" value="NA-bd_OB-fold"/>
</dbReference>
<dbReference type="InterPro" id="IPR006032">
    <property type="entry name" value="Ribosomal_uS12"/>
</dbReference>
<dbReference type="InterPro" id="IPR005679">
    <property type="entry name" value="Ribosomal_uS12_bac"/>
</dbReference>
<dbReference type="NCBIfam" id="TIGR00981">
    <property type="entry name" value="rpsL_bact"/>
    <property type="match status" value="1"/>
</dbReference>
<dbReference type="PANTHER" id="PTHR11652">
    <property type="entry name" value="30S RIBOSOMAL PROTEIN S12 FAMILY MEMBER"/>
    <property type="match status" value="1"/>
</dbReference>
<dbReference type="Pfam" id="PF00164">
    <property type="entry name" value="Ribosom_S12_S23"/>
    <property type="match status" value="1"/>
</dbReference>
<dbReference type="PIRSF" id="PIRSF002133">
    <property type="entry name" value="Ribosomal_S12/S23"/>
    <property type="match status" value="1"/>
</dbReference>
<dbReference type="PRINTS" id="PR01034">
    <property type="entry name" value="RIBOSOMALS12"/>
</dbReference>
<dbReference type="SUPFAM" id="SSF50249">
    <property type="entry name" value="Nucleic acid-binding proteins"/>
    <property type="match status" value="1"/>
</dbReference>
<dbReference type="PROSITE" id="PS00055">
    <property type="entry name" value="RIBOSOMAL_S12"/>
    <property type="match status" value="1"/>
</dbReference>
<keyword id="KW-0488">Methylation</keyword>
<keyword id="KW-1185">Reference proteome</keyword>
<keyword id="KW-0687">Ribonucleoprotein</keyword>
<keyword id="KW-0689">Ribosomal protein</keyword>
<keyword id="KW-0694">RNA-binding</keyword>
<keyword id="KW-0699">rRNA-binding</keyword>
<keyword id="KW-0820">tRNA-binding</keyword>
<comment type="function">
    <text evidence="2">With S4 and S5 plays an important role in translational accuracy.</text>
</comment>
<comment type="function">
    <text evidence="2">Interacts with and stabilizes bases of the 16S rRNA that are involved in tRNA selection in the A site and with the mRNA backbone. Located at the interface of the 30S and 50S subunits, it traverses the body of the 30S subunit contacting proteins on the other side and probably holding the rRNA structure together. The combined cluster of proteins S8, S12 and S17 appears to hold together the shoulder and platform of the 30S subunit.</text>
</comment>
<comment type="subunit">
    <text evidence="2">Part of the 30S ribosomal subunit. Contacts proteins S8 and S17. May interact with IF1 in the 30S initiation complex.</text>
</comment>
<comment type="similarity">
    <text evidence="2">Belongs to the universal ribosomal protein uS12 family.</text>
</comment>
<accession>Q5GST9</accession>
<gene>
    <name evidence="2" type="primary">rpsL</name>
    <name type="ordered locus">Wbm0346</name>
</gene>
<protein>
    <recommendedName>
        <fullName evidence="2">Small ribosomal subunit protein uS12</fullName>
    </recommendedName>
    <alternativeName>
        <fullName evidence="3">30S ribosomal protein S12</fullName>
    </alternativeName>
</protein>
<name>RS12_WOLTR</name>